<proteinExistence type="evidence at protein level"/>
<gene>
    <name type="primary">Invs</name>
    <name type="synonym">Inv</name>
    <name type="synonym">Nphp2</name>
</gene>
<protein>
    <recommendedName>
        <fullName>Inversin</fullName>
    </recommendedName>
    <alternativeName>
        <fullName>Inversion of embryo turning protein</fullName>
    </alternativeName>
    <alternativeName>
        <fullName>Nephrocystin-2</fullName>
    </alternativeName>
</protein>
<comment type="function">
    <text evidence="1 5 6 7">Required for normal renal development and establishment of left-right axis. Probably acts as a molecular switch between different Wnt signaling pathways. Inhibits the canonical Wnt pathway by targeting cytoplasmic disheveled (DVL1) for degradation by the ubiquitin-proteasome. This suggests that it is required in renal development to oppose the repression of terminal differentiation of tubular epithelial cells by Wnt signaling (By similarity). Involved in the organization of apical junctions in kidney cells together with NPHP1, NPHP4 and RPGRIP1L/NPHP8. Does not seem to be strictly required for ciliogenesis.</text>
</comment>
<comment type="subunit">
    <text evidence="1">Interacts with microtubules. Interacts with NPHP1. Interacts with DVL1, PRICKLE (PRICKLE1 or PRICKLE2) and Strabismus (VANGL1 or VANGL2) (By similarity). Binds calmodulin via its IQ domains. Interacts with APC2. Interacts with alpha-, beta-, and gamma-catenin. Interacts with N-cadherin (CDH2). Interacts with NPHP3 (By similarity). Interacts with IQCB1; the interaction likely requires additional interactors (By similarity). Component of a complex containing at least ANKS6, INVS, NEK8 and NPHP3. ANKS6 may organize complex assembly by linking INVS and NPHP3 to NEK8 and INVS may target the complex to the proximal ciliary axoneme (By similarity).</text>
</comment>
<comment type="interaction">
    <interactant intactId="EBI-4281337">
        <id>O89019</id>
    </interactant>
    <interactant intactId="EBI-4282243">
        <id>Q8BP00</id>
        <label>Iqcb1</label>
    </interactant>
    <organismsDiffer>false</organismsDiffer>
    <experiments>2</experiments>
</comment>
<comment type="interaction">
    <interactant intactId="EBI-4281337">
        <id>O89019</id>
    </interactant>
    <interactant intactId="EBI-4282339">
        <id>Q91ZR4</id>
        <label>Nek8</label>
    </interactant>
    <organismsDiffer>false</organismsDiffer>
    <experiments>2</experiments>
</comment>
<comment type="subcellular location">
    <subcellularLocation>
        <location>Cytoplasm</location>
    </subcellularLocation>
    <subcellularLocation>
        <location>Cytoplasm</location>
        <location>Cytoskeleton</location>
    </subcellularLocation>
    <subcellularLocation>
        <location>Membrane</location>
        <topology>Peripheral membrane protein</topology>
    </subcellularLocation>
    <subcellularLocation>
        <location>Nucleus</location>
    </subcellularLocation>
    <subcellularLocation>
        <location>Cytoplasm</location>
        <location>Perinuclear region</location>
    </subcellularLocation>
    <subcellularLocation>
        <location>Cytoplasm</location>
        <location>Cytoskeleton</location>
        <location>Spindle</location>
    </subcellularLocation>
    <text evidence="1">Associates with several components of the cytoskeleton including ciliary, random and polarized microtubules. During mitosis, it is recruited to mitotic spindle (By similarity). Membrane localization is dependent upon cell-cell contacts and is redistributed when cell adhesion is disrupted after incubation of the cell monolayer with low-calcium/EGTA medium. Also nuclear and perinuclear.</text>
</comment>
<comment type="alternative products">
    <event type="alternative splicing"/>
    <isoform>
        <id>O89019-1</id>
        <name>1</name>
        <name>F</name>
        <sequence type="displayed"/>
    </isoform>
    <isoform>
        <id>O89019-2</id>
        <name>2</name>
        <name>S2</name>
        <sequence type="described" ref="VSP_014505"/>
    </isoform>
    <isoform>
        <id>O89019-3</id>
        <name>3</name>
        <name>S1</name>
        <sequence type="described" ref="VSP_014506"/>
    </isoform>
    <isoform>
        <id>O89019-4</id>
        <name>4</name>
        <sequence type="described" ref="VSP_014498"/>
    </isoform>
    <isoform>
        <id>O89019-5</id>
        <name>5</name>
        <sequence type="described" ref="VSP_014499 VSP_014500"/>
    </isoform>
    <isoform>
        <id>O89019-6</id>
        <name>6</name>
        <sequence type="described" ref="VSP_014503 VSP_014504"/>
    </isoform>
    <isoform>
        <id>O89019-7</id>
        <name>7</name>
        <sequence type="described" ref="VSP_014501 VSP_014502"/>
    </isoform>
</comment>
<comment type="tissue specificity">
    <text evidence="4 6">Strongly expressed in the primary cilia of renal cells, especially in the varicosities, swellings observed in the cilia. Localizes in the node monocilia and in other 9+0 monocilia, including those of kidney epithelial cells and the pituitary gland, but it does not localize to 9+2 cilia (at protein level). In adult, it is expressed at high level in liver and kidney. Weakly or not expressed in other tissues.</text>
</comment>
<comment type="developmental stage">
    <text evidence="6">Expressed from 7 dpc. Expressed in presomite-stage embryos, before asymmetrical expression of Nodal and Lefty.</text>
</comment>
<comment type="domain">
    <text>The D-box 1 (destruction box 1) mediates the interaction with APC2, and may act as a recognition signal for degradation via the ubiquitin-proteasome pathway.</text>
</comment>
<comment type="PTM">
    <text>May be ubiquitinated via its interaction with APC2.</text>
</comment>
<comment type="PTM">
    <text evidence="1">Hydroxylated at Asn-75, most probably by HIF1AN.</text>
</comment>
<comment type="disruption phenotype">
    <text evidence="6">Constant reversal of left/right polarity (situs inversus) and cyst formation in the kidneys.</text>
</comment>
<comment type="miscellaneous">
    <molecule>Isoform 2</molecule>
    <text evidence="9">Exon 14b skipped.</text>
</comment>
<comment type="miscellaneous">
    <molecule>Isoform 3</molecule>
    <text evidence="9">Exon 14a skipped.</text>
</comment>
<comment type="miscellaneous">
    <molecule>Isoform 4</molecule>
    <text evidence="9">Exon 5 skipped.</text>
</comment>
<comment type="miscellaneous">
    <molecule>Isoform 5</molecule>
    <text evidence="9">Exon 13 skipped.</text>
</comment>
<comment type="miscellaneous">
    <molecule>Isoform 7</molecule>
    <text evidence="9">Exon 13 skipped with exon 14b.</text>
</comment>
<name>INVS_MOUSE</name>
<accession>O89019</accession>
<accession>O88849</accession>
<keyword id="KW-0025">Alternative splicing</keyword>
<keyword id="KW-0040">ANK repeat</keyword>
<keyword id="KW-0112">Calmodulin-binding</keyword>
<keyword id="KW-0963">Cytoplasm</keyword>
<keyword id="KW-0206">Cytoskeleton</keyword>
<keyword id="KW-0217">Developmental protein</keyword>
<keyword id="KW-0379">Hydroxylation</keyword>
<keyword id="KW-0472">Membrane</keyword>
<keyword id="KW-0493">Microtubule</keyword>
<keyword id="KW-0539">Nucleus</keyword>
<keyword id="KW-1185">Reference proteome</keyword>
<keyword id="KW-0677">Repeat</keyword>
<keyword id="KW-0832">Ubl conjugation</keyword>
<keyword id="KW-0879">Wnt signaling pathway</keyword>
<organism>
    <name type="scientific">Mus musculus</name>
    <name type="common">Mouse</name>
    <dbReference type="NCBI Taxonomy" id="10090"/>
    <lineage>
        <taxon>Eukaryota</taxon>
        <taxon>Metazoa</taxon>
        <taxon>Chordata</taxon>
        <taxon>Craniata</taxon>
        <taxon>Vertebrata</taxon>
        <taxon>Euteleostomi</taxon>
        <taxon>Mammalia</taxon>
        <taxon>Eutheria</taxon>
        <taxon>Euarchontoglires</taxon>
        <taxon>Glires</taxon>
        <taxon>Rodentia</taxon>
        <taxon>Myomorpha</taxon>
        <taxon>Muroidea</taxon>
        <taxon>Muridae</taxon>
        <taxon>Murinae</taxon>
        <taxon>Mus</taxon>
        <taxon>Mus</taxon>
    </lineage>
</organism>
<evidence type="ECO:0000250" key="1"/>
<evidence type="ECO:0000255" key="2">
    <source>
        <dbReference type="PROSITE-ProRule" id="PRU00116"/>
    </source>
</evidence>
<evidence type="ECO:0000256" key="3">
    <source>
        <dbReference type="SAM" id="MobiDB-lite"/>
    </source>
</evidence>
<evidence type="ECO:0000269" key="4">
    <source>
    </source>
</evidence>
<evidence type="ECO:0000269" key="5">
    <source>
    </source>
</evidence>
<evidence type="ECO:0000269" key="6">
    <source>
    </source>
</evidence>
<evidence type="ECO:0000269" key="7">
    <source>
    </source>
</evidence>
<evidence type="ECO:0000303" key="8">
    <source>
    </source>
</evidence>
<evidence type="ECO:0000305" key="9"/>
<sequence length="1062" mass="117129">MNISEDVLSTGSSLASQVHAAAVNGDKGALQRLIVGNSALRDKEDRFGRTPLMYCVLADRVDCADALLKAGADVNKTDHSRRTALHLAAQKGNYRFMKLLLTRRANWMQKDLEEMTPLHLSTRHRSPKCLALLLKFMAPGEVDTQDKNKQTALHWSAYYNNPEHAKLLIKHDSNIGIPDVEGKIPLHWAANHKDPSAVHTVRCILDAAPTESLLNWQDYEGRTPLHFAVADGNLTVVDVLTSYESCNITSYDNLFRTPLHWAALLGHAQIVHLLLERNKSGTIPSDSQGATPLHYAAQSNFAETVKVFLQHPSVKDDSDLEGRTSFMWAAGKGNDDVLRTMLSLKSDIDINMSDKYGGTALHAAALSGHVSTVKLLLDNDAQVDATDVMKHTPLFRACEMGHRDVIQTLIKGGARVDLVDQDGHSLLHWAALGGNADVCQILIENKINPNVQDYAGRTPLQCAAYGGYINCMAVLMENNADPNIQDKEGRTALHWSCNNGYLDAIKLLLDFAAFPNQMENNEERYTPLDYALLGERHEVIQFMLEHGALSIAAIQDIAAFKIQAVYKGYKVRKAFRDRKNLLMKHEQLRKDAAAKKREEENKRKEAEQQKGQLDTDPPRSHCSSSAPVLPCPPSPQNEGSKQDATPSKQPPASHTVQSPDPEHSRLPGRCPGRASQGDSSIDLQGTASRKPSETPIEHCRGPSACVHPRSWEGGNSSKNQGTSSVEKRRGETNGKHRRCEEGPSSARQPLCTGSGRPAEKGEDSSPAVASASQQDHPRKPNKRQDRAARPRGASQKRRTHQLRDRCSPAGSSRPGSAKGEVACADQSSLHRHTPRSKVTQDKLIGGVSSGLPLSTEASRSGCKQLYEDICASPETGVAHGPPPGQCMNIHLLPVEQRLLIIQRERSRKELFRRKNKAAAVIQRAWRSYQLRKHLSRLLHLKQLGAREVLRCTQVCTALLLQVWRKELELKFPKSISVSRTSKSPSKGSSATKYARHSVLRQIYGCSQEGKGHHPIKSSKAPAVLHLSSVNSLQSIHLDNSGRSKKFSYNLQPSSQSKNKPKL</sequence>
<reference key="1">
    <citation type="journal article" date="1998" name="Nature">
        <title>Cloning of inv, a gene that controls left/right asymmetry and kidney development.</title>
        <authorList>
            <person name="Mochizuki T."/>
            <person name="Saijoh Y."/>
            <person name="Tsuchiya K."/>
            <person name="Shirayoshi Y."/>
            <person name="Takai S."/>
            <person name="Taya C."/>
            <person name="Yonekawa H."/>
            <person name="Yamada K."/>
            <person name="Nihei H."/>
            <person name="Nakatsuji N."/>
            <person name="Overbeek P.A."/>
            <person name="Hamada H."/>
            <person name="Yokoyama T."/>
        </authorList>
    </citation>
    <scope>NUCLEOTIDE SEQUENCE [MRNA]</scope>
    <scope>FUNCTION</scope>
    <scope>TISSUE SPECIFICITY</scope>
    <scope>DEVELOPMENTAL STAGE</scope>
    <scope>DISRUPTION PHENOTYPE</scope>
    <source>
        <tissue>Embryo</tissue>
    </source>
</reference>
<reference key="2">
    <citation type="journal article" date="1998" name="Nat. Genet.">
        <title>Inversin, a novel gene in the vertebrate left-right axis pathway, is partially deleted in the inv mouse.</title>
        <authorList>
            <person name="Morgan D."/>
            <person name="Turnpenny L."/>
            <person name="Goodship J."/>
            <person name="Dai W."/>
            <person name="Majumder K."/>
            <person name="Matthews L."/>
            <person name="Gardner A."/>
            <person name="Schuster G."/>
            <person name="Vien L."/>
            <person name="Harrison W."/>
            <person name="Elder F.F.B."/>
            <person name="Penman-Splitt M."/>
            <person name="Overbeek P."/>
            <person name="Strachan T."/>
        </authorList>
    </citation>
    <scope>NUCLEOTIDE SEQUENCE [MRNA] (ISOFORMS 1; 2 AND 3)</scope>
    <scope>NUCLEOTIDE SEQUENCE [GENOMIC DNA] OF 92-1062</scope>
    <scope>FUNCTION</scope>
    <source>
        <strain>FVB/N</strain>
        <tissue>Embryo</tissue>
    </source>
</reference>
<reference key="3">
    <citation type="journal article" date="2004" name="Genomics">
        <title>Analysis of multiple Invs transcripts in mouse and MDCK cells.</title>
        <authorList>
            <person name="Ward H.H."/>
            <person name="Wang J."/>
            <person name="Phillips C."/>
        </authorList>
    </citation>
    <scope>ALTERNATIVE SPLICING (ISOFORMS 1; 2; 3; 4; 5; 6 AND 7)</scope>
</reference>
<reference key="4">
    <citation type="journal article" date="2003" name="Development">
        <title>The left-right determinant Inversin is a component of node monocilia and other 9+0 cilia.</title>
        <authorList>
            <person name="Watanabe D."/>
            <person name="Saijoh Y."/>
            <person name="Nonaka S."/>
            <person name="Sasaki G."/>
            <person name="Ikawa Y."/>
            <person name="Yokoyama T."/>
            <person name="Hamada H."/>
        </authorList>
    </citation>
    <scope>SUBCELLULAR LOCATION</scope>
</reference>
<reference key="5">
    <citation type="journal article" date="2002" name="Hum. Genet.">
        <title>The left-right determinant inversin has highly conserved ankyrin repeat and IQ domains and interacts with calmodulin.</title>
        <authorList>
            <person name="Morgan D."/>
            <person name="Goodship J."/>
            <person name="Essner J.J."/>
            <person name="Vogan K.J."/>
            <person name="Turnpenny L."/>
            <person name="Yost H.J."/>
            <person name="Tabin C.J."/>
            <person name="Strachan T."/>
        </authorList>
    </citation>
    <scope>CALMODULIN-BINDING</scope>
</reference>
<reference key="6">
    <citation type="journal article" date="2002" name="Hum. Mol. Genet.">
        <title>Expression analyses and interaction with the anaphase promoting complex protein Apc2 suggest a role for inversin in primary cilia and involvement in the cell cycle.</title>
        <authorList>
            <person name="Morgan D."/>
            <person name="Eley L."/>
            <person name="Sayer J."/>
            <person name="Strachan T."/>
            <person name="Yates L.M."/>
            <person name="Craighead A.S."/>
            <person name="Goodship J.A."/>
        </authorList>
    </citation>
    <scope>TISSUE SPECIFICITY</scope>
    <scope>INTERACTION WITH APC2</scope>
    <scope>MUTAGENESIS OF ASN-498 AND ASN-915</scope>
</reference>
<reference key="7">
    <citation type="journal article" date="2002" name="Mol. Biol. Cell">
        <title>Inversin forms a complex with catenins and N-cadherin in polarized epithelial cells.</title>
        <authorList>
            <person name="Nuernberger J."/>
            <person name="Bacallao R.L."/>
            <person name="Phillips C.L."/>
        </authorList>
    </citation>
    <scope>SUBCELLULAR LOCATION</scope>
    <scope>INTERACTION WITH CATENINS AND CDH2</scope>
</reference>
<reference key="8">
    <citation type="journal article" date="2011" name="Cell">
        <title>Mapping the NPHP-JBTS-MKS protein network reveals ciliopathy disease genes and pathways.</title>
        <authorList>
            <person name="Sang L."/>
            <person name="Miller J.J."/>
            <person name="Corbit K.C."/>
            <person name="Giles R.H."/>
            <person name="Brauer M.J."/>
            <person name="Otto E.A."/>
            <person name="Baye L.M."/>
            <person name="Wen X."/>
            <person name="Scales S.J."/>
            <person name="Kwong M."/>
            <person name="Huntzicker E.G."/>
            <person name="Sfakianos M.K."/>
            <person name="Sandoval W."/>
            <person name="Bazan J.F."/>
            <person name="Kulkarni P."/>
            <person name="Garcia-Gonzalo F.R."/>
            <person name="Seol A.D."/>
            <person name="O'Toole J.F."/>
            <person name="Held S."/>
            <person name="Reutter H.M."/>
            <person name="Lane W.S."/>
            <person name="Rafiq M.A."/>
            <person name="Noor A."/>
            <person name="Ansar M."/>
            <person name="Devi A.R."/>
            <person name="Sheffield V.C."/>
            <person name="Slusarski D.C."/>
            <person name="Vincent J.B."/>
            <person name="Doherty D.A."/>
            <person name="Hildebrandt F."/>
            <person name="Reiter J.F."/>
            <person name="Jackson P.K."/>
        </authorList>
    </citation>
    <scope>FUNCTION</scope>
</reference>
<feature type="chain" id="PRO_0000067017" description="Inversin">
    <location>
        <begin position="1"/>
        <end position="1062"/>
    </location>
</feature>
<feature type="repeat" description="ANK 1">
    <location>
        <begin position="13"/>
        <end position="42"/>
    </location>
</feature>
<feature type="repeat" description="ANK 2">
    <location>
        <begin position="47"/>
        <end position="76"/>
    </location>
</feature>
<feature type="repeat" description="ANK 3">
    <location>
        <begin position="80"/>
        <end position="110"/>
    </location>
</feature>
<feature type="repeat" description="ANK 4">
    <location>
        <begin position="113"/>
        <end position="144"/>
    </location>
</feature>
<feature type="repeat" description="ANK 5">
    <location>
        <begin position="148"/>
        <end position="177"/>
    </location>
</feature>
<feature type="repeat" description="ANK 6">
    <location>
        <begin position="181"/>
        <end position="213"/>
    </location>
</feature>
<feature type="repeat" description="ANK 7">
    <location>
        <begin position="220"/>
        <end position="250"/>
    </location>
</feature>
<feature type="repeat" description="ANK 8">
    <location>
        <begin position="254"/>
        <end position="283"/>
    </location>
</feature>
<feature type="repeat" description="ANK 9">
    <location>
        <begin position="288"/>
        <end position="317"/>
    </location>
</feature>
<feature type="repeat" description="ANK 10">
    <location>
        <begin position="321"/>
        <end position="350"/>
    </location>
</feature>
<feature type="repeat" description="ANK 11">
    <location>
        <begin position="356"/>
        <end position="385"/>
    </location>
</feature>
<feature type="repeat" description="ANK 12">
    <location>
        <begin position="389"/>
        <end position="418"/>
    </location>
</feature>
<feature type="repeat" description="ANK 13">
    <location>
        <begin position="422"/>
        <end position="451"/>
    </location>
</feature>
<feature type="repeat" description="ANK 14">
    <location>
        <begin position="455"/>
        <end position="484"/>
    </location>
</feature>
<feature type="repeat" description="ANK 15">
    <location>
        <begin position="488"/>
        <end position="517"/>
    </location>
</feature>
<feature type="repeat" description="ANK 16">
    <location>
        <begin position="523"/>
        <end position="553"/>
    </location>
</feature>
<feature type="domain" description="IQ 1" evidence="2">
    <location>
        <begin position="555"/>
        <end position="584"/>
    </location>
</feature>
<feature type="domain" description="IQ 2" evidence="2">
    <location>
        <begin position="914"/>
        <end position="943"/>
    </location>
</feature>
<feature type="region of interest" description="Disordered" evidence="3">
    <location>
        <begin position="589"/>
        <end position="849"/>
    </location>
</feature>
<feature type="region of interest" description="Disordered" evidence="3">
    <location>
        <begin position="1042"/>
        <end position="1062"/>
    </location>
</feature>
<feature type="short sequence motif" description="D-box 1">
    <location>
        <begin position="490"/>
        <end position="498"/>
    </location>
</feature>
<feature type="short sequence motif" description="D-box 2">
    <location>
        <begin position="907"/>
        <end position="915"/>
    </location>
</feature>
<feature type="compositionally biased region" description="Basic and acidic residues" evidence="3">
    <location>
        <begin position="589"/>
        <end position="608"/>
    </location>
</feature>
<feature type="compositionally biased region" description="Polar residues" evidence="3">
    <location>
        <begin position="636"/>
        <end position="658"/>
    </location>
</feature>
<feature type="compositionally biased region" description="Polar residues" evidence="3">
    <location>
        <begin position="676"/>
        <end position="689"/>
    </location>
</feature>
<feature type="compositionally biased region" description="Basic and acidic residues" evidence="3">
    <location>
        <begin position="690"/>
        <end position="700"/>
    </location>
</feature>
<feature type="compositionally biased region" description="Polar residues" evidence="3">
    <location>
        <begin position="713"/>
        <end position="724"/>
    </location>
</feature>
<feature type="compositionally biased region" description="Basic and acidic residues" evidence="3">
    <location>
        <begin position="725"/>
        <end position="741"/>
    </location>
</feature>
<feature type="compositionally biased region" description="Basic and acidic residues" evidence="3">
    <location>
        <begin position="775"/>
        <end position="788"/>
    </location>
</feature>
<feature type="compositionally biased region" description="Polar residues" evidence="3">
    <location>
        <begin position="1046"/>
        <end position="1062"/>
    </location>
</feature>
<feature type="modified residue" description="3-hydroxyasparagine" evidence="1">
    <location>
        <position position="75"/>
    </location>
</feature>
<feature type="splice variant" id="VSP_014498" description="In isoform 4." evidence="9">
    <location>
        <begin position="150"/>
        <end position="205"/>
    </location>
</feature>
<feature type="splice variant" id="VSP_014499" description="In isoform 5." evidence="9">
    <original>GRTA</original>
    <variation>VHTP</variation>
    <location>
        <begin position="489"/>
        <end position="492"/>
    </location>
</feature>
<feature type="splice variant" id="VSP_014500" description="In isoform 5." evidence="9">
    <location>
        <begin position="493"/>
        <end position="1062"/>
    </location>
</feature>
<feature type="splice variant" id="VSP_014501" description="In isoform 7." evidence="9">
    <original>KREEENKRKEAEQQKGQLDTDPPRSHCSSSAPVLPCPPSPQNEGSKQDATPSKQPPASHTVQSPDPEHSRLPGRCPGRASQGDSSIDLQGTASRKPSETPIEHCRGPSACVHPRSWEGGNSSKNQGTSSVEKRRGETNGKHRRCEEGPSSARQPLCTGSG</original>
    <variation>NTHRALQRPFCLCAPQILGRWQQLQEPGNILCGEAQRAAPADNPEGTKQERAVSTEKQGSGGHPASLAKLPAQEAPVSASAFEAAWSQRSAQMYPSVHSPAPPGLEERTGTQIPKVHLSKQDIEESIQRLVGHKVCQALSAQADLRLFSRRERTSSHQIF</variation>
    <location>
        <begin position="596"/>
        <end position="755"/>
    </location>
</feature>
<feature type="splice variant" id="VSP_014503" description="In isoform 6." evidence="9">
    <original>KREEENKRKEAEQQKGQLDTDPPRSHCSSSAPVLPCP</original>
    <variation>NTHRALQRPFCLCAPQILGRWQQLQEPGNILCGEAQR</variation>
    <location>
        <begin position="596"/>
        <end position="632"/>
    </location>
</feature>
<feature type="splice variant" id="VSP_014504" description="In isoform 6." evidence="9">
    <location>
        <begin position="633"/>
        <end position="1062"/>
    </location>
</feature>
<feature type="splice variant" id="VSP_014505" description="In isoform 2." evidence="8">
    <location>
        <begin position="730"/>
        <end position="894"/>
    </location>
</feature>
<feature type="splice variant" id="VSP_014506" description="In isoform 3." evidence="8">
    <location>
        <begin position="730"/>
        <end position="849"/>
    </location>
</feature>
<feature type="splice variant" id="VSP_014502" description="In isoform 7." evidence="9">
    <location>
        <begin position="756"/>
        <end position="1062"/>
    </location>
</feature>
<feature type="mutagenesis site" description="Abolishes interaction with APC2." evidence="4">
    <original>N</original>
    <variation>A</variation>
    <location>
        <position position="498"/>
    </location>
</feature>
<feature type="mutagenesis site" description="Does not affect interaction with APC2." evidence="4">
    <original>N</original>
    <variation>A</variation>
    <location>
        <position position="915"/>
    </location>
</feature>
<feature type="sequence conflict" description="In Ref. 2; CAA09388." evidence="9" ref="2">
    <original>V</original>
    <variation>I</variation>
    <location>
        <position position="23"/>
    </location>
</feature>
<feature type="sequence conflict" description="In Ref. 2; CAA09388." evidence="9" ref="2">
    <original>R</original>
    <variation>K</variation>
    <location>
        <position position="32"/>
    </location>
</feature>
<feature type="sequence conflict" description="In Ref. 2; CAA09388." evidence="9" ref="2">
    <original>L</original>
    <variation>Q</variation>
    <location>
        <position position="320"/>
    </location>
</feature>
<feature type="sequence conflict" description="In Ref. 2; CAA09388." evidence="9" ref="2">
    <original>LQC</original>
    <variation>IQS</variation>
    <location>
        <begin position="460"/>
        <end position="462"/>
    </location>
</feature>
<feature type="sequence conflict" description="In Ref. 2; CAA09388." evidence="9" ref="2">
    <original>Y</original>
    <variation>N</variation>
    <location>
        <position position="468"/>
    </location>
</feature>
<feature type="sequence conflict" description="In Ref. 2; CAA09388." evidence="9" ref="2">
    <original>G</original>
    <variation>A</variation>
    <location>
        <position position="639"/>
    </location>
</feature>
<feature type="sequence conflict" description="In Ref. 2; CAA09388." evidence="9" ref="2">
    <original>L</original>
    <variation>P</variation>
    <location>
        <position position="666"/>
    </location>
</feature>
<dbReference type="EMBL" id="AF034860">
    <property type="protein sequence ID" value="AAC34976.3"/>
    <property type="molecule type" value="mRNA"/>
</dbReference>
<dbReference type="EMBL" id="AJ004828">
    <property type="status" value="NOT_ANNOTATED_CDS"/>
    <property type="molecule type" value="Genomic_DNA"/>
</dbReference>
<dbReference type="EMBL" id="AJ010902">
    <property type="protein sequence ID" value="CAA09388.1"/>
    <property type="molecule type" value="mRNA"/>
</dbReference>
<dbReference type="CCDS" id="CCDS18166.1">
    <molecule id="O89019-1"/>
</dbReference>
<dbReference type="PIR" id="T14151">
    <property type="entry name" value="T14151"/>
</dbReference>
<dbReference type="PIR" id="T30255">
    <property type="entry name" value="T30255"/>
</dbReference>
<dbReference type="SMR" id="O89019"/>
<dbReference type="CORUM" id="O89019"/>
<dbReference type="FunCoup" id="O89019">
    <property type="interactions" value="329"/>
</dbReference>
<dbReference type="IntAct" id="O89019">
    <property type="interactions" value="7"/>
</dbReference>
<dbReference type="MINT" id="O89019"/>
<dbReference type="STRING" id="10090.ENSMUSP00000030029"/>
<dbReference type="GlyGen" id="O89019">
    <property type="glycosylation" value="1 site"/>
</dbReference>
<dbReference type="iPTMnet" id="O89019"/>
<dbReference type="PhosphoSitePlus" id="O89019"/>
<dbReference type="PaxDb" id="10090-ENSMUSP00000030029"/>
<dbReference type="ProteomicsDB" id="268976">
    <molecule id="O89019-1"/>
</dbReference>
<dbReference type="ProteomicsDB" id="268977">
    <molecule id="O89019-2"/>
</dbReference>
<dbReference type="ProteomicsDB" id="268978">
    <molecule id="O89019-3"/>
</dbReference>
<dbReference type="ProteomicsDB" id="268979">
    <molecule id="O89019-4"/>
</dbReference>
<dbReference type="ProteomicsDB" id="268980">
    <molecule id="O89019-5"/>
</dbReference>
<dbReference type="ProteomicsDB" id="268981">
    <molecule id="O89019-6"/>
</dbReference>
<dbReference type="ProteomicsDB" id="268982">
    <molecule id="O89019-7"/>
</dbReference>
<dbReference type="AGR" id="MGI:1335082"/>
<dbReference type="MGI" id="MGI:1335082">
    <property type="gene designation" value="Invs"/>
</dbReference>
<dbReference type="eggNOG" id="KOG0504">
    <property type="taxonomic scope" value="Eukaryota"/>
</dbReference>
<dbReference type="InParanoid" id="O89019"/>
<dbReference type="PhylomeDB" id="O89019"/>
<dbReference type="ChiTaRS" id="Invs">
    <property type="organism name" value="mouse"/>
</dbReference>
<dbReference type="PRO" id="PR:O89019"/>
<dbReference type="Proteomes" id="UP000000589">
    <property type="component" value="Unplaced"/>
</dbReference>
<dbReference type="RNAct" id="O89019">
    <property type="molecule type" value="protein"/>
</dbReference>
<dbReference type="GO" id="GO:0097546">
    <property type="term" value="C:ciliary base"/>
    <property type="evidence" value="ECO:0000314"/>
    <property type="project" value="MGI"/>
</dbReference>
<dbReference type="GO" id="GO:0097543">
    <property type="term" value="C:ciliary inversin compartment"/>
    <property type="evidence" value="ECO:0000314"/>
    <property type="project" value="MGI"/>
</dbReference>
<dbReference type="GO" id="GO:0005576">
    <property type="term" value="C:extracellular region"/>
    <property type="evidence" value="ECO:0007669"/>
    <property type="project" value="GOC"/>
</dbReference>
<dbReference type="GO" id="GO:0016020">
    <property type="term" value="C:membrane"/>
    <property type="evidence" value="ECO:0007669"/>
    <property type="project" value="UniProtKB-SubCell"/>
</dbReference>
<dbReference type="GO" id="GO:0005874">
    <property type="term" value="C:microtubule"/>
    <property type="evidence" value="ECO:0007669"/>
    <property type="project" value="UniProtKB-KW"/>
</dbReference>
<dbReference type="GO" id="GO:0005634">
    <property type="term" value="C:nucleus"/>
    <property type="evidence" value="ECO:0007669"/>
    <property type="project" value="UniProtKB-SubCell"/>
</dbReference>
<dbReference type="GO" id="GO:0048471">
    <property type="term" value="C:perinuclear region of cytoplasm"/>
    <property type="evidence" value="ECO:0007669"/>
    <property type="project" value="UniProtKB-SubCell"/>
</dbReference>
<dbReference type="GO" id="GO:0005819">
    <property type="term" value="C:spindle"/>
    <property type="evidence" value="ECO:0007669"/>
    <property type="project" value="UniProtKB-SubCell"/>
</dbReference>
<dbReference type="GO" id="GO:0005516">
    <property type="term" value="F:calmodulin binding"/>
    <property type="evidence" value="ECO:0007669"/>
    <property type="project" value="UniProtKB-KW"/>
</dbReference>
<dbReference type="GO" id="GO:0048513">
    <property type="term" value="P:animal organ development"/>
    <property type="evidence" value="ECO:0000315"/>
    <property type="project" value="MGI"/>
</dbReference>
<dbReference type="GO" id="GO:0060971">
    <property type="term" value="P:embryonic heart tube left/right pattern formation"/>
    <property type="evidence" value="ECO:0000315"/>
    <property type="project" value="MGI"/>
</dbReference>
<dbReference type="GO" id="GO:0060287">
    <property type="term" value="P:epithelial cilium movement involved in determination of left/right asymmetry"/>
    <property type="evidence" value="ECO:0000315"/>
    <property type="project" value="MGI"/>
</dbReference>
<dbReference type="GO" id="GO:0001822">
    <property type="term" value="P:kidney development"/>
    <property type="evidence" value="ECO:0000315"/>
    <property type="project" value="MGI"/>
</dbReference>
<dbReference type="GO" id="GO:0090090">
    <property type="term" value="P:negative regulation of canonical Wnt signaling pathway"/>
    <property type="evidence" value="ECO:0000250"/>
    <property type="project" value="UniProtKB"/>
</dbReference>
<dbReference type="GO" id="GO:0031016">
    <property type="term" value="P:pancreas development"/>
    <property type="evidence" value="ECO:0000315"/>
    <property type="project" value="MGI"/>
</dbReference>
<dbReference type="GO" id="GO:0009791">
    <property type="term" value="P:post-embryonic development"/>
    <property type="evidence" value="ECO:0000315"/>
    <property type="project" value="MGI"/>
</dbReference>
<dbReference type="GO" id="GO:1904108">
    <property type="term" value="P:protein localization to ciliary inversin compartment"/>
    <property type="evidence" value="ECO:0000315"/>
    <property type="project" value="MGI"/>
</dbReference>
<dbReference type="GO" id="GO:0016055">
    <property type="term" value="P:Wnt signaling pathway"/>
    <property type="evidence" value="ECO:0007669"/>
    <property type="project" value="UniProtKB-KW"/>
</dbReference>
<dbReference type="CDD" id="cd23767">
    <property type="entry name" value="IQCD"/>
    <property type="match status" value="2"/>
</dbReference>
<dbReference type="FunFam" id="1.25.40.20:FF:000078">
    <property type="entry name" value="Inversin"/>
    <property type="match status" value="1"/>
</dbReference>
<dbReference type="FunFam" id="1.25.40.20:FF:000082">
    <property type="entry name" value="Inversin"/>
    <property type="match status" value="1"/>
</dbReference>
<dbReference type="FunFam" id="1.25.40.20:FF:000092">
    <property type="entry name" value="inversin isoform X1"/>
    <property type="match status" value="1"/>
</dbReference>
<dbReference type="FunFam" id="1.25.40.20:FF:000134">
    <property type="entry name" value="inversin isoform X1"/>
    <property type="match status" value="1"/>
</dbReference>
<dbReference type="FunFam" id="1.25.40.20:FF:000144">
    <property type="entry name" value="inversin isoform X1"/>
    <property type="match status" value="1"/>
</dbReference>
<dbReference type="Gene3D" id="1.25.40.20">
    <property type="entry name" value="Ankyrin repeat-containing domain"/>
    <property type="match status" value="4"/>
</dbReference>
<dbReference type="InterPro" id="IPR002110">
    <property type="entry name" value="Ankyrin_rpt"/>
</dbReference>
<dbReference type="InterPro" id="IPR036770">
    <property type="entry name" value="Ankyrin_rpt-contain_sf"/>
</dbReference>
<dbReference type="InterPro" id="IPR000048">
    <property type="entry name" value="IQ_motif_EF-hand-BS"/>
</dbReference>
<dbReference type="PANTHER" id="PTHR24198">
    <property type="entry name" value="ANKYRIN REPEAT AND PROTEIN KINASE DOMAIN-CONTAINING PROTEIN"/>
    <property type="match status" value="1"/>
</dbReference>
<dbReference type="PANTHER" id="PTHR24198:SF194">
    <property type="entry name" value="INVERSIN-A"/>
    <property type="match status" value="1"/>
</dbReference>
<dbReference type="Pfam" id="PF00023">
    <property type="entry name" value="Ank"/>
    <property type="match status" value="3"/>
</dbReference>
<dbReference type="Pfam" id="PF12796">
    <property type="entry name" value="Ank_2"/>
    <property type="match status" value="4"/>
</dbReference>
<dbReference type="Pfam" id="PF00612">
    <property type="entry name" value="IQ"/>
    <property type="match status" value="2"/>
</dbReference>
<dbReference type="SMART" id="SM00248">
    <property type="entry name" value="ANK"/>
    <property type="match status" value="15"/>
</dbReference>
<dbReference type="SMART" id="SM00015">
    <property type="entry name" value="IQ"/>
    <property type="match status" value="2"/>
</dbReference>
<dbReference type="SUPFAM" id="SSF48403">
    <property type="entry name" value="Ankyrin repeat"/>
    <property type="match status" value="2"/>
</dbReference>
<dbReference type="PROSITE" id="PS50297">
    <property type="entry name" value="ANK_REP_REGION"/>
    <property type="match status" value="1"/>
</dbReference>
<dbReference type="PROSITE" id="PS50088">
    <property type="entry name" value="ANK_REPEAT"/>
    <property type="match status" value="11"/>
</dbReference>
<dbReference type="PROSITE" id="PS50096">
    <property type="entry name" value="IQ"/>
    <property type="match status" value="2"/>
</dbReference>